<evidence type="ECO:0000255" key="1">
    <source>
        <dbReference type="HAMAP-Rule" id="MF_01416"/>
    </source>
</evidence>
<gene>
    <name evidence="1" type="primary">atpH</name>
    <name type="ordered locus">Mlg_2872</name>
</gene>
<proteinExistence type="inferred from homology"/>
<feature type="chain" id="PRO_0000370876" description="ATP synthase subunit delta">
    <location>
        <begin position="1"/>
        <end position="179"/>
    </location>
</feature>
<keyword id="KW-0066">ATP synthesis</keyword>
<keyword id="KW-0997">Cell inner membrane</keyword>
<keyword id="KW-1003">Cell membrane</keyword>
<keyword id="KW-0139">CF(1)</keyword>
<keyword id="KW-0375">Hydrogen ion transport</keyword>
<keyword id="KW-0406">Ion transport</keyword>
<keyword id="KW-0472">Membrane</keyword>
<keyword id="KW-1185">Reference proteome</keyword>
<keyword id="KW-0813">Transport</keyword>
<reference key="1">
    <citation type="submission" date="2006-08" db="EMBL/GenBank/DDBJ databases">
        <title>Complete sequence of Alkalilimnicola ehrilichei MLHE-1.</title>
        <authorList>
            <person name="Copeland A."/>
            <person name="Lucas S."/>
            <person name="Lapidus A."/>
            <person name="Barry K."/>
            <person name="Detter J.C."/>
            <person name="Glavina del Rio T."/>
            <person name="Hammon N."/>
            <person name="Israni S."/>
            <person name="Dalin E."/>
            <person name="Tice H."/>
            <person name="Pitluck S."/>
            <person name="Sims D."/>
            <person name="Brettin T."/>
            <person name="Bruce D."/>
            <person name="Han C."/>
            <person name="Tapia R."/>
            <person name="Gilna P."/>
            <person name="Schmutz J."/>
            <person name="Larimer F."/>
            <person name="Land M."/>
            <person name="Hauser L."/>
            <person name="Kyrpides N."/>
            <person name="Mikhailova N."/>
            <person name="Oremland R.S."/>
            <person name="Hoeft S.E."/>
            <person name="Switzer-Blum J."/>
            <person name="Kulp T."/>
            <person name="King G."/>
            <person name="Tabita R."/>
            <person name="Witte B."/>
            <person name="Santini J.M."/>
            <person name="Basu P."/>
            <person name="Hollibaugh J.T."/>
            <person name="Xie G."/>
            <person name="Stolz J.F."/>
            <person name="Richardson P."/>
        </authorList>
    </citation>
    <scope>NUCLEOTIDE SEQUENCE [LARGE SCALE GENOMIC DNA]</scope>
    <source>
        <strain>ATCC BAA-1101 / DSM 17681 / MLHE-1</strain>
    </source>
</reference>
<name>ATPD_ALKEH</name>
<organism>
    <name type="scientific">Alkalilimnicola ehrlichii (strain ATCC BAA-1101 / DSM 17681 / MLHE-1)</name>
    <dbReference type="NCBI Taxonomy" id="187272"/>
    <lineage>
        <taxon>Bacteria</taxon>
        <taxon>Pseudomonadati</taxon>
        <taxon>Pseudomonadota</taxon>
        <taxon>Gammaproteobacteria</taxon>
        <taxon>Chromatiales</taxon>
        <taxon>Ectothiorhodospiraceae</taxon>
        <taxon>Alkalilimnicola</taxon>
    </lineage>
</organism>
<protein>
    <recommendedName>
        <fullName evidence="1">ATP synthase subunit delta</fullName>
    </recommendedName>
    <alternativeName>
        <fullName evidence="1">ATP synthase F(1) sector subunit delta</fullName>
    </alternativeName>
    <alternativeName>
        <fullName evidence="1">F-type ATPase subunit delta</fullName>
        <shortName evidence="1">F-ATPase subunit delta</shortName>
    </alternativeName>
</protein>
<sequence length="179" mass="19173">MAEQTTLARPYAKAVFELTKDAKTRNTWSKRLQALGTVAADDQVAALVGNPRVSREQLIGLLLDAVGEDTLGQEGKNLVQLLADNGRLGLLPEIAALYEHLRAEAEGVVDVQVTSASKLTKEQQDQIAGALKKRLGRKVRLHCRTDEALIGGALIQAGDLTIDGSVRGKLARLSSAMAH</sequence>
<accession>Q0A4M5</accession>
<dbReference type="EMBL" id="CP000453">
    <property type="protein sequence ID" value="ABI58212.1"/>
    <property type="molecule type" value="Genomic_DNA"/>
</dbReference>
<dbReference type="RefSeq" id="WP_011630605.1">
    <property type="nucleotide sequence ID" value="NC_008340.1"/>
</dbReference>
<dbReference type="SMR" id="Q0A4M5"/>
<dbReference type="KEGG" id="aeh:Mlg_2872"/>
<dbReference type="eggNOG" id="COG0712">
    <property type="taxonomic scope" value="Bacteria"/>
</dbReference>
<dbReference type="HOGENOM" id="CLU_085114_3_0_6"/>
<dbReference type="OrthoDB" id="9816221at2"/>
<dbReference type="Proteomes" id="UP000001962">
    <property type="component" value="Chromosome"/>
</dbReference>
<dbReference type="GO" id="GO:0005886">
    <property type="term" value="C:plasma membrane"/>
    <property type="evidence" value="ECO:0007669"/>
    <property type="project" value="UniProtKB-SubCell"/>
</dbReference>
<dbReference type="GO" id="GO:0045259">
    <property type="term" value="C:proton-transporting ATP synthase complex"/>
    <property type="evidence" value="ECO:0007669"/>
    <property type="project" value="UniProtKB-KW"/>
</dbReference>
<dbReference type="GO" id="GO:0046933">
    <property type="term" value="F:proton-transporting ATP synthase activity, rotational mechanism"/>
    <property type="evidence" value="ECO:0007669"/>
    <property type="project" value="UniProtKB-UniRule"/>
</dbReference>
<dbReference type="Gene3D" id="1.10.520.20">
    <property type="entry name" value="N-terminal domain of the delta subunit of the F1F0-ATP synthase"/>
    <property type="match status" value="1"/>
</dbReference>
<dbReference type="HAMAP" id="MF_01416">
    <property type="entry name" value="ATP_synth_delta_bact"/>
    <property type="match status" value="1"/>
</dbReference>
<dbReference type="InterPro" id="IPR026015">
    <property type="entry name" value="ATP_synth_OSCP/delta_N_sf"/>
</dbReference>
<dbReference type="InterPro" id="IPR020781">
    <property type="entry name" value="ATPase_OSCP/d_CS"/>
</dbReference>
<dbReference type="InterPro" id="IPR000711">
    <property type="entry name" value="ATPase_OSCP/dsu"/>
</dbReference>
<dbReference type="NCBIfam" id="TIGR01145">
    <property type="entry name" value="ATP_synt_delta"/>
    <property type="match status" value="1"/>
</dbReference>
<dbReference type="NCBIfam" id="NF004402">
    <property type="entry name" value="PRK05758.2-2"/>
    <property type="match status" value="1"/>
</dbReference>
<dbReference type="PANTHER" id="PTHR11910">
    <property type="entry name" value="ATP SYNTHASE DELTA CHAIN"/>
    <property type="match status" value="1"/>
</dbReference>
<dbReference type="Pfam" id="PF00213">
    <property type="entry name" value="OSCP"/>
    <property type="match status" value="1"/>
</dbReference>
<dbReference type="PRINTS" id="PR00125">
    <property type="entry name" value="ATPASEDELTA"/>
</dbReference>
<dbReference type="SUPFAM" id="SSF47928">
    <property type="entry name" value="N-terminal domain of the delta subunit of the F1F0-ATP synthase"/>
    <property type="match status" value="1"/>
</dbReference>
<dbReference type="PROSITE" id="PS00389">
    <property type="entry name" value="ATPASE_DELTA"/>
    <property type="match status" value="1"/>
</dbReference>
<comment type="function">
    <text evidence="1">F(1)F(0) ATP synthase produces ATP from ADP in the presence of a proton or sodium gradient. F-type ATPases consist of two structural domains, F(1) containing the extramembraneous catalytic core and F(0) containing the membrane proton channel, linked together by a central stalk and a peripheral stalk. During catalysis, ATP synthesis in the catalytic domain of F(1) is coupled via a rotary mechanism of the central stalk subunits to proton translocation.</text>
</comment>
<comment type="function">
    <text evidence="1">This protein is part of the stalk that links CF(0) to CF(1). It either transmits conformational changes from CF(0) to CF(1) or is implicated in proton conduction.</text>
</comment>
<comment type="subunit">
    <text evidence="1">F-type ATPases have 2 components, F(1) - the catalytic core - and F(0) - the membrane proton channel. F(1) has five subunits: alpha(3), beta(3), gamma(1), delta(1), epsilon(1). F(0) has three main subunits: a(1), b(2) and c(10-14). The alpha and beta chains form an alternating ring which encloses part of the gamma chain. F(1) is attached to F(0) by a central stalk formed by the gamma and epsilon chains, while a peripheral stalk is formed by the delta and b chains.</text>
</comment>
<comment type="subcellular location">
    <subcellularLocation>
        <location evidence="1">Cell inner membrane</location>
        <topology evidence="1">Peripheral membrane protein</topology>
    </subcellularLocation>
</comment>
<comment type="similarity">
    <text evidence="1">Belongs to the ATPase delta chain family.</text>
</comment>